<keyword id="KW-0249">Electron transport</keyword>
<keyword id="KW-0256">Endoplasmic reticulum</keyword>
<keyword id="KW-0275">Fatty acid biosynthesis</keyword>
<keyword id="KW-0276">Fatty acid metabolism</keyword>
<keyword id="KW-0349">Heme</keyword>
<keyword id="KW-0408">Iron</keyword>
<keyword id="KW-0444">Lipid biosynthesis</keyword>
<keyword id="KW-0443">Lipid metabolism</keyword>
<keyword id="KW-0472">Membrane</keyword>
<keyword id="KW-0479">Metal-binding</keyword>
<keyword id="KW-0560">Oxidoreductase</keyword>
<keyword id="KW-1185">Reference proteome</keyword>
<keyword id="KW-0812">Transmembrane</keyword>
<keyword id="KW-1133">Transmembrane helix</keyword>
<keyword id="KW-0813">Transport</keyword>
<accession>Q0VAX3</accession>
<name>FS2P1_MOUSE</name>
<protein>
    <recommendedName>
        <fullName>Fatty acid desaturase 2-like protein FADS2B</fullName>
    </recommendedName>
    <alternativeName>
        <fullName evidence="6">Fatty acid desaturase 2B, pseudogene</fullName>
    </alternativeName>
</protein>
<gene>
    <name evidence="6" type="primary">Fads2b</name>
</gene>
<dbReference type="EMBL" id="BC120879">
    <property type="protein sequence ID" value="AAI20880.1"/>
    <property type="molecule type" value="mRNA"/>
</dbReference>
<dbReference type="EMBL" id="AL929147">
    <property type="status" value="NOT_ANNOTATED_CDS"/>
    <property type="molecule type" value="Genomic_DNA"/>
</dbReference>
<dbReference type="CCDS" id="CCDS38168.1"/>
<dbReference type="RefSeq" id="NP_001075133.1">
    <property type="nucleotide sequence ID" value="NM_001081664.2"/>
</dbReference>
<dbReference type="SMR" id="Q0VAX3"/>
<dbReference type="STRING" id="10090.ENSMUSP00000097507"/>
<dbReference type="iPTMnet" id="Q0VAX3"/>
<dbReference type="PhosphoSitePlus" id="Q0VAX3"/>
<dbReference type="SwissPalm" id="Q0VAX3"/>
<dbReference type="PaxDb" id="10090-ENSMUSP00000097507"/>
<dbReference type="ProteomicsDB" id="267527"/>
<dbReference type="Ensembl" id="ENSMUST00000099923.2">
    <property type="protein sequence ID" value="ENSMUSP00000097507.2"/>
    <property type="gene ID" value="ENSMUSG00000075217.2"/>
</dbReference>
<dbReference type="GeneID" id="228151"/>
<dbReference type="KEGG" id="mmu:228151"/>
<dbReference type="UCSC" id="uc008kkj.1">
    <property type="organism name" value="mouse"/>
</dbReference>
<dbReference type="AGR" id="MGI:2687041"/>
<dbReference type="CTD" id="643181"/>
<dbReference type="MGI" id="MGI:2687041">
    <property type="gene designation" value="Fads2b"/>
</dbReference>
<dbReference type="VEuPathDB" id="HostDB:ENSMUSG00000075217"/>
<dbReference type="eggNOG" id="KOG4232">
    <property type="taxonomic scope" value="Eukaryota"/>
</dbReference>
<dbReference type="GeneTree" id="ENSGT00950000182990"/>
<dbReference type="HOGENOM" id="CLU_016265_0_1_1"/>
<dbReference type="InParanoid" id="Q0VAX3"/>
<dbReference type="OMA" id="LSANWWN"/>
<dbReference type="OrthoDB" id="260091at2759"/>
<dbReference type="PhylomeDB" id="Q0VAX3"/>
<dbReference type="TreeFam" id="TF313604"/>
<dbReference type="UniPathway" id="UPA00658"/>
<dbReference type="BioGRID-ORCS" id="228151">
    <property type="hits" value="2 hits in 76 CRISPR screens"/>
</dbReference>
<dbReference type="PRO" id="PR:Q0VAX3"/>
<dbReference type="Proteomes" id="UP000000589">
    <property type="component" value="Chromosome 2"/>
</dbReference>
<dbReference type="RNAct" id="Q0VAX3">
    <property type="molecule type" value="protein"/>
</dbReference>
<dbReference type="Bgee" id="ENSMUSG00000075217">
    <property type="expression patterns" value="Expressed in uterine cervix and 82 other cell types or tissues"/>
</dbReference>
<dbReference type="GO" id="GO:0005789">
    <property type="term" value="C:endoplasmic reticulum membrane"/>
    <property type="evidence" value="ECO:0007669"/>
    <property type="project" value="UniProtKB-SubCell"/>
</dbReference>
<dbReference type="GO" id="GO:0046872">
    <property type="term" value="F:metal ion binding"/>
    <property type="evidence" value="ECO:0007669"/>
    <property type="project" value="UniProtKB-KW"/>
</dbReference>
<dbReference type="GO" id="GO:0016491">
    <property type="term" value="F:oxidoreductase activity"/>
    <property type="evidence" value="ECO:0007669"/>
    <property type="project" value="UniProtKB-KW"/>
</dbReference>
<dbReference type="GO" id="GO:0006636">
    <property type="term" value="P:unsaturated fatty acid biosynthetic process"/>
    <property type="evidence" value="ECO:0007669"/>
    <property type="project" value="UniProtKB-UniPathway"/>
</dbReference>
<dbReference type="CDD" id="cd03506">
    <property type="entry name" value="Delta6-FADS-like"/>
    <property type="match status" value="1"/>
</dbReference>
<dbReference type="Gene3D" id="3.10.120.10">
    <property type="entry name" value="Cytochrome b5-like heme/steroid binding domain"/>
    <property type="match status" value="1"/>
</dbReference>
<dbReference type="InterPro" id="IPR001199">
    <property type="entry name" value="Cyt_B5-like_heme/steroid-bd"/>
</dbReference>
<dbReference type="InterPro" id="IPR036400">
    <property type="entry name" value="Cyt_B5-like_heme/steroid_sf"/>
</dbReference>
<dbReference type="InterPro" id="IPR005804">
    <property type="entry name" value="FA_desaturase_dom"/>
</dbReference>
<dbReference type="InterPro" id="IPR012171">
    <property type="entry name" value="Fatty_acid_desaturase"/>
</dbReference>
<dbReference type="PANTHER" id="PTHR19353">
    <property type="entry name" value="FATTY ACID DESATURASE 2"/>
    <property type="match status" value="1"/>
</dbReference>
<dbReference type="PANTHER" id="PTHR19353:SF22">
    <property type="entry name" value="FATTY ACID DESATURASE 2-LIKE PROTEIN FADS2B-RELATED"/>
    <property type="match status" value="1"/>
</dbReference>
<dbReference type="Pfam" id="PF00173">
    <property type="entry name" value="Cyt-b5"/>
    <property type="match status" value="1"/>
</dbReference>
<dbReference type="Pfam" id="PF00487">
    <property type="entry name" value="FA_desaturase"/>
    <property type="match status" value="1"/>
</dbReference>
<dbReference type="PIRSF" id="PIRSF015921">
    <property type="entry name" value="FA_sphinglp_des"/>
    <property type="match status" value="1"/>
</dbReference>
<dbReference type="SMART" id="SM01117">
    <property type="entry name" value="Cyt-b5"/>
    <property type="match status" value="1"/>
</dbReference>
<dbReference type="SUPFAM" id="SSF55856">
    <property type="entry name" value="Cytochrome b5-like heme/steroid binding domain"/>
    <property type="match status" value="1"/>
</dbReference>
<dbReference type="PROSITE" id="PS50255">
    <property type="entry name" value="CYTOCHROME_B5_2"/>
    <property type="match status" value="1"/>
</dbReference>
<proteinExistence type="evidence at transcript level"/>
<sequence>MKLEEKLEHNESLVGKSRPCLHDTHQANGKPIANGNPTANGKVEVYEKQEANGKGNRLGKCLNLYTWQEIQRHSQEADQWLVIDRKVYNVTDWAGKHPGGRRVLNHYAGQDATDAFRAMHLDLGMVKLYLKPLLIGELSPEEPSQEKNKNAQLVEDFRELRKTLEAMNMFSANLRFFFLHLAQILILEISAWLILHHFGSSWLVTILISFLLTVSQAQCSFLQHDLGHLSMFKKSKWNHLMHKFVMCHLKGLSADWWNYRHFQHHVKPNIYPKDPDIDVGPLFLVGDTQPIKYGKKKIKYIDYEKQHLYFYMVALPFLMPVYFNLQSMQVMYLRKYWMDIAWVSSFYIRYFITFGPFYGIFGTVLLIYLVKFIESPWIAYVTQMSHIPMKMSSEENHDWLSTQVVATCNIEQSFFNDWFTGHLNFQIEHHLFPTMPRHNYHKVAPLVKSLCAKHGLQYINKPILKAFGDIVRSLKKSASLWMNAYYE</sequence>
<reference key="1">
    <citation type="journal article" date="2009" name="PLoS Biol.">
        <title>Lineage-specific biology revealed by a finished genome assembly of the mouse.</title>
        <authorList>
            <person name="Church D.M."/>
            <person name="Goodstadt L."/>
            <person name="Hillier L.W."/>
            <person name="Zody M.C."/>
            <person name="Goldstein S."/>
            <person name="She X."/>
            <person name="Bult C.J."/>
            <person name="Agarwala R."/>
            <person name="Cherry J.L."/>
            <person name="DiCuccio M."/>
            <person name="Hlavina W."/>
            <person name="Kapustin Y."/>
            <person name="Meric P."/>
            <person name="Maglott D."/>
            <person name="Birtle Z."/>
            <person name="Marques A.C."/>
            <person name="Graves T."/>
            <person name="Zhou S."/>
            <person name="Teague B."/>
            <person name="Potamousis K."/>
            <person name="Churas C."/>
            <person name="Place M."/>
            <person name="Herschleb J."/>
            <person name="Runnheim R."/>
            <person name="Forrest D."/>
            <person name="Amos-Landgraf J."/>
            <person name="Schwartz D.C."/>
            <person name="Cheng Z."/>
            <person name="Lindblad-Toh K."/>
            <person name="Eichler E.E."/>
            <person name="Ponting C.P."/>
        </authorList>
    </citation>
    <scope>NUCLEOTIDE SEQUENCE [LARGE SCALE GENOMIC DNA]</scope>
    <source>
        <strain>C57BL/6J</strain>
    </source>
</reference>
<reference key="2">
    <citation type="journal article" date="2004" name="Genome Res.">
        <title>The status, quality, and expansion of the NIH full-length cDNA project: the Mammalian Gene Collection (MGC).</title>
        <authorList>
            <consortium name="The MGC Project Team"/>
        </authorList>
    </citation>
    <scope>NUCLEOTIDE SEQUENCE [LARGE SCALE MRNA]</scope>
</reference>
<comment type="pathway">
    <text>Lipid metabolism; polyunsaturated fatty acid biosynthesis.</text>
</comment>
<comment type="subcellular location">
    <subcellularLocation>
        <location evidence="1">Endoplasmic reticulum membrane</location>
        <topology evidence="2">Multi-pass membrane protein</topology>
    </subcellularLocation>
</comment>
<comment type="domain">
    <text>The histidine box domains may contain the active site and/or be involved in metal ion binding.</text>
</comment>
<comment type="similarity">
    <text evidence="5">Belongs to the fatty acid desaturase type 1 family.</text>
</comment>
<feature type="chain" id="PRO_0000348958" description="Fatty acid desaturase 2-like protein FADS2B">
    <location>
        <begin position="1"/>
        <end position="487"/>
    </location>
</feature>
<feature type="topological domain" description="Cytoplasmic" evidence="2">
    <location>
        <begin position="1"/>
        <end position="175"/>
    </location>
</feature>
<feature type="transmembrane region" description="Helical" evidence="2">
    <location>
        <begin position="176"/>
        <end position="196"/>
    </location>
</feature>
<feature type="topological domain" description="Lumenal" evidence="2">
    <location>
        <begin position="197"/>
        <end position="201"/>
    </location>
</feature>
<feature type="transmembrane region" description="Helical" evidence="2">
    <location>
        <begin position="202"/>
        <end position="222"/>
    </location>
</feature>
<feature type="topological domain" description="Cytoplasmic" evidence="2">
    <location>
        <begin position="223"/>
        <end position="307"/>
    </location>
</feature>
<feature type="transmembrane region" description="Helical" evidence="2">
    <location>
        <begin position="308"/>
        <end position="328"/>
    </location>
</feature>
<feature type="topological domain" description="Lumenal" evidence="2">
    <location>
        <begin position="329"/>
        <end position="349"/>
    </location>
</feature>
<feature type="transmembrane region" description="Helical" evidence="2">
    <location>
        <begin position="350"/>
        <end position="370"/>
    </location>
</feature>
<feature type="topological domain" description="Cytoplasmic" evidence="2">
    <location>
        <begin position="371"/>
        <end position="487"/>
    </location>
</feature>
<feature type="domain" description="Cytochrome b5 heme-binding" evidence="3">
    <location>
        <begin position="62"/>
        <end position="139"/>
    </location>
</feature>
<feature type="region of interest" description="Disordered" evidence="4">
    <location>
        <begin position="1"/>
        <end position="20"/>
    </location>
</feature>
<feature type="short sequence motif" description="Histidine box-1">
    <location>
        <begin position="224"/>
        <end position="228"/>
    </location>
</feature>
<feature type="short sequence motif" description="Histidine box-2">
    <location>
        <begin position="261"/>
        <end position="265"/>
    </location>
</feature>
<feature type="short sequence motif" description="Histidine box-3">
    <location>
        <begin position="426"/>
        <end position="430"/>
    </location>
</feature>
<feature type="compositionally biased region" description="Basic and acidic residues" evidence="4">
    <location>
        <begin position="1"/>
        <end position="11"/>
    </location>
</feature>
<feature type="binding site" description="axial binding residue" evidence="3">
    <location>
        <position position="97"/>
    </location>
    <ligand>
        <name>heme</name>
        <dbReference type="ChEBI" id="CHEBI:30413"/>
    </ligand>
    <ligandPart>
        <name>Fe</name>
        <dbReference type="ChEBI" id="CHEBI:18248"/>
    </ligandPart>
</feature>
<feature type="binding site" description="axial binding residue" evidence="3">
    <location>
        <position position="120"/>
    </location>
    <ligand>
        <name>heme</name>
        <dbReference type="ChEBI" id="CHEBI:30413"/>
    </ligand>
    <ligandPart>
        <name>Fe</name>
        <dbReference type="ChEBI" id="CHEBI:18248"/>
    </ligandPart>
</feature>
<organism>
    <name type="scientific">Mus musculus</name>
    <name type="common">Mouse</name>
    <dbReference type="NCBI Taxonomy" id="10090"/>
    <lineage>
        <taxon>Eukaryota</taxon>
        <taxon>Metazoa</taxon>
        <taxon>Chordata</taxon>
        <taxon>Craniata</taxon>
        <taxon>Vertebrata</taxon>
        <taxon>Euteleostomi</taxon>
        <taxon>Mammalia</taxon>
        <taxon>Eutheria</taxon>
        <taxon>Euarchontoglires</taxon>
        <taxon>Glires</taxon>
        <taxon>Rodentia</taxon>
        <taxon>Myomorpha</taxon>
        <taxon>Muroidea</taxon>
        <taxon>Muridae</taxon>
        <taxon>Murinae</taxon>
        <taxon>Mus</taxon>
        <taxon>Mus</taxon>
    </lineage>
</organism>
<evidence type="ECO:0000250" key="1">
    <source>
        <dbReference type="UniProtKB" id="O95864"/>
    </source>
</evidence>
<evidence type="ECO:0000255" key="2"/>
<evidence type="ECO:0000255" key="3">
    <source>
        <dbReference type="PROSITE-ProRule" id="PRU00279"/>
    </source>
</evidence>
<evidence type="ECO:0000256" key="4">
    <source>
        <dbReference type="SAM" id="MobiDB-lite"/>
    </source>
</evidence>
<evidence type="ECO:0000305" key="5"/>
<evidence type="ECO:0000312" key="6">
    <source>
        <dbReference type="MGI" id="MGI:2687041"/>
    </source>
</evidence>